<evidence type="ECO:0000250" key="1"/>
<evidence type="ECO:0000255" key="2">
    <source>
        <dbReference type="PROSITE-ProRule" id="PRU10001"/>
    </source>
</evidence>
<evidence type="ECO:0000256" key="3">
    <source>
        <dbReference type="SAM" id="MobiDB-lite"/>
    </source>
</evidence>
<evidence type="ECO:0000269" key="4">
    <source ref="1"/>
</evidence>
<evidence type="ECO:0000305" key="5"/>
<sequence length="291" mass="31501">MASGGQFPPQKQESQPGKEHLMDPSPQHASPHYKPANKLQGKVALVTGGDSGIGRSVCYHFALEGATVAFTFVKGHEDKDANETLELLRKAKSSDAKDPIAIAADLGFDDNCKKVVDQVVNAFGSIDVLVNNAAEQYKASTVEDIDEERLERVFRTNIFAYFFMARHALKHMREGSTIINTTSINAYKGNAKLLDYTATKGAIVAFTRGLSLQLISKGIRVNGVAPGPVWTPLIPSSFDEEEVKQFGSEVPMKRAGQPYEIATAYVFLASCDSSYYSGQVLHPNGGAIVNG</sequence>
<feature type="chain" id="PRO_0000239259" description="Glucose and ribitol dehydrogenase">
    <location>
        <begin position="1"/>
        <end position="291"/>
    </location>
</feature>
<feature type="region of interest" description="Disordered" evidence="3">
    <location>
        <begin position="1"/>
        <end position="35"/>
    </location>
</feature>
<feature type="active site" description="Proton acceptor" evidence="2">
    <location>
        <position position="196"/>
    </location>
</feature>
<feature type="binding site" evidence="1">
    <location>
        <begin position="45"/>
        <end position="69"/>
    </location>
    <ligand>
        <name>NAD(+)</name>
        <dbReference type="ChEBI" id="CHEBI:57540"/>
    </ligand>
</feature>
<feature type="binding site" evidence="1">
    <location>
        <position position="183"/>
    </location>
    <ligand>
        <name>substrate</name>
    </ligand>
</feature>
<name>GRDH_DAUCA</name>
<reference key="1">
    <citation type="journal article" date="2004" name="Plant Biotechnol.">
        <title>Isolation and characterization of six abscisic acid-inducible genes from carrot somatic embryos.</title>
        <authorList>
            <person name="Shiota H."/>
            <person name="Yang G."/>
            <person name="Shen S."/>
            <person name="Eun C.-H."/>
            <person name="Watabe K."/>
            <person name="Tanaka I."/>
            <person name="Kamada H."/>
        </authorList>
    </citation>
    <scope>NUCLEOTIDE SEQUENCE [MRNA]</scope>
    <scope>INDUCTION</scope>
    <scope>TISSUE SPECIFICITY</scope>
    <scope>DEVELOPMENTAL STAGE</scope>
    <source>
        <strain>cv. US-Harumakigosun</strain>
        <tissue>Somatic embryo</tissue>
    </source>
</reference>
<protein>
    <recommendedName>
        <fullName>Glucose and ribitol dehydrogenase</fullName>
        <ecNumber>1.1.1.-</ecNumber>
    </recommendedName>
    <alternativeName>
        <fullName>Carrot ABA-induced in somatic embryos 5 protein</fullName>
    </alternativeName>
</protein>
<keyword id="KW-0560">Oxidoreductase</keyword>
<proteinExistence type="evidence at transcript level"/>
<gene>
    <name type="primary">CAISE5</name>
</gene>
<comment type="function">
    <text>May act as a short alcohol-polyol-sugar dehydrogenase possibly related to carbohydrate metabolism and the acquisition of desiccation tolerance. May also be involved in signal transduction.</text>
</comment>
<comment type="tissue specificity">
    <text evidence="4">Expressed in embryogenic cells, somatic embryos and seeds in the later stages of development, but not in non-embryogenic cells and mature leaves.</text>
</comment>
<comment type="developmental stage">
    <text evidence="4">Increased expression during seed maturation (after 29 days after fertilization).</text>
</comment>
<comment type="induction">
    <text evidence="4">By abscisic acid.</text>
</comment>
<comment type="similarity">
    <text evidence="5">Belongs to the short-chain dehydrogenases/reductases (SDR) family.</text>
</comment>
<dbReference type="EC" id="1.1.1.-"/>
<dbReference type="EMBL" id="AB105043">
    <property type="protein sequence ID" value="BAD86648.1"/>
    <property type="molecule type" value="mRNA"/>
</dbReference>
<dbReference type="SMR" id="Q5KTS5"/>
<dbReference type="GO" id="GO:0016614">
    <property type="term" value="F:oxidoreductase activity, acting on CH-OH group of donors"/>
    <property type="evidence" value="ECO:0007669"/>
    <property type="project" value="UniProtKB-ARBA"/>
</dbReference>
<dbReference type="CDD" id="cd05355">
    <property type="entry name" value="SDR_c1"/>
    <property type="match status" value="1"/>
</dbReference>
<dbReference type="FunFam" id="3.40.50.720:FF:000084">
    <property type="entry name" value="Short-chain dehydrogenase reductase"/>
    <property type="match status" value="1"/>
</dbReference>
<dbReference type="Gene3D" id="3.40.50.720">
    <property type="entry name" value="NAD(P)-binding Rossmann-like Domain"/>
    <property type="match status" value="1"/>
</dbReference>
<dbReference type="InterPro" id="IPR036291">
    <property type="entry name" value="NAD(P)-bd_dom_sf"/>
</dbReference>
<dbReference type="InterPro" id="IPR020904">
    <property type="entry name" value="Sc_DH/Rdtase_CS"/>
</dbReference>
<dbReference type="InterPro" id="IPR002347">
    <property type="entry name" value="SDR_fam"/>
</dbReference>
<dbReference type="PANTHER" id="PTHR48107:SF16">
    <property type="entry name" value="NADPH-DEPENDENT ALDEHYDE REDUCTASE 1, CHLOROPLASTIC"/>
    <property type="match status" value="1"/>
</dbReference>
<dbReference type="PANTHER" id="PTHR48107">
    <property type="entry name" value="NADPH-DEPENDENT ALDEHYDE REDUCTASE-LIKE PROTEIN, CHLOROPLASTIC-RELATED"/>
    <property type="match status" value="1"/>
</dbReference>
<dbReference type="Pfam" id="PF13561">
    <property type="entry name" value="adh_short_C2"/>
    <property type="match status" value="1"/>
</dbReference>
<dbReference type="PRINTS" id="PR00081">
    <property type="entry name" value="GDHRDH"/>
</dbReference>
<dbReference type="PRINTS" id="PR00080">
    <property type="entry name" value="SDRFAMILY"/>
</dbReference>
<dbReference type="SUPFAM" id="SSF51735">
    <property type="entry name" value="NAD(P)-binding Rossmann-fold domains"/>
    <property type="match status" value="1"/>
</dbReference>
<dbReference type="PROSITE" id="PS00061">
    <property type="entry name" value="ADH_SHORT"/>
    <property type="match status" value="1"/>
</dbReference>
<accession>Q5KTS5</accession>
<organism>
    <name type="scientific">Daucus carota</name>
    <name type="common">Wild carrot</name>
    <dbReference type="NCBI Taxonomy" id="4039"/>
    <lineage>
        <taxon>Eukaryota</taxon>
        <taxon>Viridiplantae</taxon>
        <taxon>Streptophyta</taxon>
        <taxon>Embryophyta</taxon>
        <taxon>Tracheophyta</taxon>
        <taxon>Spermatophyta</taxon>
        <taxon>Magnoliopsida</taxon>
        <taxon>eudicotyledons</taxon>
        <taxon>Gunneridae</taxon>
        <taxon>Pentapetalae</taxon>
        <taxon>asterids</taxon>
        <taxon>campanulids</taxon>
        <taxon>Apiales</taxon>
        <taxon>Apiaceae</taxon>
        <taxon>Apioideae</taxon>
        <taxon>Scandiceae</taxon>
        <taxon>Daucinae</taxon>
        <taxon>Daucus</taxon>
        <taxon>Daucus sect. Daucus</taxon>
    </lineage>
</organism>